<protein>
    <recommendedName>
        <fullName evidence="1">Large ribosomal subunit protein uL3</fullName>
    </recommendedName>
    <alternativeName>
        <fullName evidence="2">50S ribosomal protein L3</fullName>
    </alternativeName>
</protein>
<keyword id="KW-0488">Methylation</keyword>
<keyword id="KW-0687">Ribonucleoprotein</keyword>
<keyword id="KW-0689">Ribosomal protein</keyword>
<keyword id="KW-0694">RNA-binding</keyword>
<keyword id="KW-0699">rRNA-binding</keyword>
<comment type="function">
    <text evidence="1">One of the primary rRNA binding proteins, it binds directly near the 3'-end of the 23S rRNA, where it nucleates assembly of the 50S subunit.</text>
</comment>
<comment type="subunit">
    <text evidence="1">Part of the 50S ribosomal subunit. Forms a cluster with proteins L14 and L19.</text>
</comment>
<comment type="PTM">
    <text evidence="1">Methylated by PrmB.</text>
</comment>
<comment type="similarity">
    <text evidence="1">Belongs to the universal ribosomal protein uL3 family.</text>
</comment>
<sequence>MRSGVIAQKVGMTRVYNDAGEHVPVTVLRMDGCQVVATRTVEKNGYTAVQLGAGQAKVKNTSKAMRGNFAVANVEPKAKLAEFRVSEDNLLEIGTELKAGHFAAGQLVDVTGTTIGKGFAGAMKRHGFGGLRATHGVSVSHRSHGSTGSRQDPGKVFKNKKMAGHMGQTRVTTQNLEVVSTDEDRGLILIKGAVPGSKGAWIIVRDAVKSAAK</sequence>
<accession>B3PWS1</accession>
<evidence type="ECO:0000255" key="1">
    <source>
        <dbReference type="HAMAP-Rule" id="MF_01325"/>
    </source>
</evidence>
<evidence type="ECO:0000305" key="2"/>
<proteinExistence type="inferred from homology"/>
<name>RL3_RHIE6</name>
<reference key="1">
    <citation type="journal article" date="2010" name="Appl. Environ. Microbiol.">
        <title>Conserved symbiotic plasmid DNA sequences in the multireplicon pangenomic structure of Rhizobium etli.</title>
        <authorList>
            <person name="Gonzalez V."/>
            <person name="Acosta J.L."/>
            <person name="Santamaria R.I."/>
            <person name="Bustos P."/>
            <person name="Fernandez J.L."/>
            <person name="Hernandez Gonzalez I.L."/>
            <person name="Diaz R."/>
            <person name="Flores M."/>
            <person name="Palacios R."/>
            <person name="Mora J."/>
            <person name="Davila G."/>
        </authorList>
    </citation>
    <scope>NUCLEOTIDE SEQUENCE [LARGE SCALE GENOMIC DNA]</scope>
    <source>
        <strain>CIAT 652</strain>
    </source>
</reference>
<gene>
    <name evidence="1" type="primary">rplC</name>
    <name type="ordered locus">RHECIAT_CH0001749</name>
</gene>
<organism>
    <name type="scientific">Rhizobium etli (strain CIAT 652)</name>
    <dbReference type="NCBI Taxonomy" id="491916"/>
    <lineage>
        <taxon>Bacteria</taxon>
        <taxon>Pseudomonadati</taxon>
        <taxon>Pseudomonadota</taxon>
        <taxon>Alphaproteobacteria</taxon>
        <taxon>Hyphomicrobiales</taxon>
        <taxon>Rhizobiaceae</taxon>
        <taxon>Rhizobium/Agrobacterium group</taxon>
        <taxon>Rhizobium</taxon>
    </lineage>
</organism>
<dbReference type="EMBL" id="CP001074">
    <property type="protein sequence ID" value="ACE90719.1"/>
    <property type="molecule type" value="Genomic_DNA"/>
</dbReference>
<dbReference type="SMR" id="B3PWS1"/>
<dbReference type="KEGG" id="rec:RHECIAT_CH0001749"/>
<dbReference type="eggNOG" id="COG0087">
    <property type="taxonomic scope" value="Bacteria"/>
</dbReference>
<dbReference type="HOGENOM" id="CLU_044142_2_0_5"/>
<dbReference type="Proteomes" id="UP000008817">
    <property type="component" value="Chromosome"/>
</dbReference>
<dbReference type="GO" id="GO:0022625">
    <property type="term" value="C:cytosolic large ribosomal subunit"/>
    <property type="evidence" value="ECO:0007669"/>
    <property type="project" value="TreeGrafter"/>
</dbReference>
<dbReference type="GO" id="GO:0019843">
    <property type="term" value="F:rRNA binding"/>
    <property type="evidence" value="ECO:0007669"/>
    <property type="project" value="UniProtKB-UniRule"/>
</dbReference>
<dbReference type="GO" id="GO:0003735">
    <property type="term" value="F:structural constituent of ribosome"/>
    <property type="evidence" value="ECO:0007669"/>
    <property type="project" value="InterPro"/>
</dbReference>
<dbReference type="GO" id="GO:0006412">
    <property type="term" value="P:translation"/>
    <property type="evidence" value="ECO:0007669"/>
    <property type="project" value="UniProtKB-UniRule"/>
</dbReference>
<dbReference type="FunFam" id="2.40.30.10:FF:000004">
    <property type="entry name" value="50S ribosomal protein L3"/>
    <property type="match status" value="1"/>
</dbReference>
<dbReference type="FunFam" id="3.30.160.810:FF:000001">
    <property type="entry name" value="50S ribosomal protein L3"/>
    <property type="match status" value="1"/>
</dbReference>
<dbReference type="Gene3D" id="3.30.160.810">
    <property type="match status" value="1"/>
</dbReference>
<dbReference type="Gene3D" id="2.40.30.10">
    <property type="entry name" value="Translation factors"/>
    <property type="match status" value="1"/>
</dbReference>
<dbReference type="HAMAP" id="MF_01325_B">
    <property type="entry name" value="Ribosomal_uL3_B"/>
    <property type="match status" value="1"/>
</dbReference>
<dbReference type="InterPro" id="IPR000597">
    <property type="entry name" value="Ribosomal_uL3"/>
</dbReference>
<dbReference type="InterPro" id="IPR019927">
    <property type="entry name" value="Ribosomal_uL3_bac/org-type"/>
</dbReference>
<dbReference type="InterPro" id="IPR019926">
    <property type="entry name" value="Ribosomal_uL3_CS"/>
</dbReference>
<dbReference type="InterPro" id="IPR009000">
    <property type="entry name" value="Transl_B-barrel_sf"/>
</dbReference>
<dbReference type="NCBIfam" id="TIGR03625">
    <property type="entry name" value="L3_bact"/>
    <property type="match status" value="1"/>
</dbReference>
<dbReference type="PANTHER" id="PTHR11229">
    <property type="entry name" value="50S RIBOSOMAL PROTEIN L3"/>
    <property type="match status" value="1"/>
</dbReference>
<dbReference type="PANTHER" id="PTHR11229:SF16">
    <property type="entry name" value="LARGE RIBOSOMAL SUBUNIT PROTEIN UL3C"/>
    <property type="match status" value="1"/>
</dbReference>
<dbReference type="Pfam" id="PF00297">
    <property type="entry name" value="Ribosomal_L3"/>
    <property type="match status" value="1"/>
</dbReference>
<dbReference type="SUPFAM" id="SSF50447">
    <property type="entry name" value="Translation proteins"/>
    <property type="match status" value="1"/>
</dbReference>
<dbReference type="PROSITE" id="PS00474">
    <property type="entry name" value="RIBOSOMAL_L3"/>
    <property type="match status" value="1"/>
</dbReference>
<feature type="chain" id="PRO_1000141907" description="Large ribosomal subunit protein uL3">
    <location>
        <begin position="1"/>
        <end position="213"/>
    </location>
</feature>
<feature type="modified residue" description="N5-methylglutamine" evidence="1">
    <location>
        <position position="151"/>
    </location>
</feature>